<organism>
    <name type="scientific">Bacillus subtilis (strain 168)</name>
    <dbReference type="NCBI Taxonomy" id="224308"/>
    <lineage>
        <taxon>Bacteria</taxon>
        <taxon>Bacillati</taxon>
        <taxon>Bacillota</taxon>
        <taxon>Bacilli</taxon>
        <taxon>Bacillales</taxon>
        <taxon>Bacillaceae</taxon>
        <taxon>Bacillus</taxon>
    </lineage>
</organism>
<comment type="function">
    <text>May be involved in the production of the exopolysaccharide (EPS) component of the extracellular matrix during biofilm formation. EPS is responsible for the adhesion of chains of cells into bundles.</text>
</comment>
<comment type="cofactor">
    <cofactor evidence="1">
        <name>pyridoxal 5'-phosphate</name>
        <dbReference type="ChEBI" id="CHEBI:597326"/>
    </cofactor>
</comment>
<comment type="induction">
    <text evidence="2">Repressed by SinR.</text>
</comment>
<comment type="similarity">
    <text evidence="3">Belongs to the DegT/DnrJ/EryC1 family.</text>
</comment>
<comment type="sequence caution" evidence="3">
    <conflict type="frameshift">
        <sequence resource="EMBL-CDS" id="CAA96482"/>
    </conflict>
</comment>
<comment type="sequence caution" evidence="3">
    <conflict type="frameshift">
        <sequence resource="EMBL-CDS" id="CAB07998"/>
    </conflict>
</comment>
<evidence type="ECO:0000250" key="1"/>
<evidence type="ECO:0000269" key="2">
    <source>
    </source>
</evidence>
<evidence type="ECO:0000305" key="3"/>
<protein>
    <recommendedName>
        <fullName>Putative pyridoxal phosphate-dependent aminotransferase EpsN</fullName>
        <ecNumber>2.6.1.-</ecNumber>
    </recommendedName>
</protein>
<feature type="chain" id="PRO_0000360687" description="Putative pyridoxal phosphate-dependent aminotransferase EpsN">
    <location>
        <begin position="1"/>
        <end position="388"/>
    </location>
</feature>
<feature type="modified residue" description="N6-(pyridoxal phosphate)lysine" evidence="1">
    <location>
        <position position="190"/>
    </location>
</feature>
<proteinExistence type="evidence at transcript level"/>
<accession>Q795J3</accession>
<accession>O08182</accession>
<accession>P71064</accession>
<keyword id="KW-0032">Aminotransferase</keyword>
<keyword id="KW-0270">Exopolysaccharide synthesis</keyword>
<keyword id="KW-0663">Pyridoxal phosphate</keyword>
<keyword id="KW-1185">Reference proteome</keyword>
<keyword id="KW-0808">Transferase</keyword>
<name>EPSN_BACSU</name>
<dbReference type="EC" id="2.6.1.-"/>
<dbReference type="EMBL" id="Z71928">
    <property type="protein sequence ID" value="CAA96482.1"/>
    <property type="status" value="ALT_FRAME"/>
    <property type="molecule type" value="Genomic_DNA"/>
</dbReference>
<dbReference type="EMBL" id="Z94043">
    <property type="protein sequence ID" value="CAB07998.1"/>
    <property type="status" value="ALT_FRAME"/>
    <property type="molecule type" value="Genomic_DNA"/>
</dbReference>
<dbReference type="EMBL" id="AL009126">
    <property type="protein sequence ID" value="CAB15428.2"/>
    <property type="molecule type" value="Genomic_DNA"/>
</dbReference>
<dbReference type="PIR" id="F70037">
    <property type="entry name" value="F70037"/>
</dbReference>
<dbReference type="RefSeq" id="NP_391303.2">
    <property type="nucleotide sequence ID" value="NC_000964.3"/>
</dbReference>
<dbReference type="RefSeq" id="WP_009968194.1">
    <property type="nucleotide sequence ID" value="NZ_OZ025638.1"/>
</dbReference>
<dbReference type="SMR" id="Q795J3"/>
<dbReference type="FunCoup" id="Q795J3">
    <property type="interactions" value="18"/>
</dbReference>
<dbReference type="STRING" id="224308.BSU34230"/>
<dbReference type="PaxDb" id="224308-BSU34230"/>
<dbReference type="EnsemblBacteria" id="CAB15428">
    <property type="protein sequence ID" value="CAB15428"/>
    <property type="gene ID" value="BSU_34230"/>
</dbReference>
<dbReference type="GeneID" id="936364"/>
<dbReference type="KEGG" id="bsu:BSU34230"/>
<dbReference type="PATRIC" id="fig|224308.179.peg.3710"/>
<dbReference type="eggNOG" id="COG0399">
    <property type="taxonomic scope" value="Bacteria"/>
</dbReference>
<dbReference type="InParanoid" id="Q795J3"/>
<dbReference type="OrthoDB" id="9810913at2"/>
<dbReference type="PhylomeDB" id="Q795J3"/>
<dbReference type="BioCyc" id="BSUB:BSU34230-MONOMER"/>
<dbReference type="Proteomes" id="UP000001570">
    <property type="component" value="Chromosome"/>
</dbReference>
<dbReference type="GO" id="GO:0030170">
    <property type="term" value="F:pyridoxal phosphate binding"/>
    <property type="evidence" value="ECO:0000318"/>
    <property type="project" value="GO_Central"/>
</dbReference>
<dbReference type="GO" id="GO:0008483">
    <property type="term" value="F:transaminase activity"/>
    <property type="evidence" value="ECO:0000318"/>
    <property type="project" value="GO_Central"/>
</dbReference>
<dbReference type="GO" id="GO:0000271">
    <property type="term" value="P:polysaccharide biosynthetic process"/>
    <property type="evidence" value="ECO:0000318"/>
    <property type="project" value="GO_Central"/>
</dbReference>
<dbReference type="CDD" id="cd00616">
    <property type="entry name" value="AHBA_syn"/>
    <property type="match status" value="1"/>
</dbReference>
<dbReference type="FunFam" id="3.40.640.10:FF:000090">
    <property type="entry name" value="Pyridoxal phosphate-dependent aminotransferase"/>
    <property type="match status" value="1"/>
</dbReference>
<dbReference type="Gene3D" id="3.90.1150.10">
    <property type="entry name" value="Aspartate Aminotransferase, domain 1"/>
    <property type="match status" value="1"/>
</dbReference>
<dbReference type="Gene3D" id="3.40.640.10">
    <property type="entry name" value="Type I PLP-dependent aspartate aminotransferase-like (Major domain)"/>
    <property type="match status" value="1"/>
</dbReference>
<dbReference type="InterPro" id="IPR000653">
    <property type="entry name" value="DegT/StrS_aminotransferase"/>
</dbReference>
<dbReference type="InterPro" id="IPR015424">
    <property type="entry name" value="PyrdxlP-dep_Trfase"/>
</dbReference>
<dbReference type="InterPro" id="IPR015421">
    <property type="entry name" value="PyrdxlP-dep_Trfase_major"/>
</dbReference>
<dbReference type="InterPro" id="IPR015422">
    <property type="entry name" value="PyrdxlP-dep_Trfase_small"/>
</dbReference>
<dbReference type="PANTHER" id="PTHR30244:SF34">
    <property type="entry name" value="DTDP-4-AMINO-4,6-DIDEOXYGALACTOSE TRANSAMINASE"/>
    <property type="match status" value="1"/>
</dbReference>
<dbReference type="PANTHER" id="PTHR30244">
    <property type="entry name" value="TRANSAMINASE"/>
    <property type="match status" value="1"/>
</dbReference>
<dbReference type="Pfam" id="PF01041">
    <property type="entry name" value="DegT_DnrJ_EryC1"/>
    <property type="match status" value="1"/>
</dbReference>
<dbReference type="PIRSF" id="PIRSF000390">
    <property type="entry name" value="PLP_StrS"/>
    <property type="match status" value="1"/>
</dbReference>
<dbReference type="SUPFAM" id="SSF53383">
    <property type="entry name" value="PLP-dependent transferases"/>
    <property type="match status" value="1"/>
</dbReference>
<reference key="1">
    <citation type="journal article" date="1996" name="Microbiology">
        <title>Integrated mapping and sequencing of a 115 kb DNA fragment from Bacillus subtilis: sequence analysis of a 21 kb segment containing the sigL locus.</title>
        <authorList>
            <person name="Fabret C."/>
            <person name="Quentin Y."/>
            <person name="Chapal N."/>
            <person name="Guiseppi A."/>
            <person name="Haiech J."/>
            <person name="Denizot F."/>
        </authorList>
    </citation>
    <scope>NUCLEOTIDE SEQUENCE [GENOMIC DNA]</scope>
    <source>
        <strain>168</strain>
    </source>
</reference>
<reference key="2">
    <citation type="submission" date="1997-04" db="EMBL/GenBank/DDBJ databases">
        <authorList>
            <person name="Denizot F."/>
        </authorList>
    </citation>
    <scope>NUCLEOTIDE SEQUENCE [GENOMIC DNA]</scope>
    <source>
        <strain>168</strain>
    </source>
</reference>
<reference key="3">
    <citation type="journal article" date="1997" name="Nature">
        <title>The complete genome sequence of the Gram-positive bacterium Bacillus subtilis.</title>
        <authorList>
            <person name="Kunst F."/>
            <person name="Ogasawara N."/>
            <person name="Moszer I."/>
            <person name="Albertini A.M."/>
            <person name="Alloni G."/>
            <person name="Azevedo V."/>
            <person name="Bertero M.G."/>
            <person name="Bessieres P."/>
            <person name="Bolotin A."/>
            <person name="Borchert S."/>
            <person name="Borriss R."/>
            <person name="Boursier L."/>
            <person name="Brans A."/>
            <person name="Braun M."/>
            <person name="Brignell S.C."/>
            <person name="Bron S."/>
            <person name="Brouillet S."/>
            <person name="Bruschi C.V."/>
            <person name="Caldwell B."/>
            <person name="Capuano V."/>
            <person name="Carter N.M."/>
            <person name="Choi S.-K."/>
            <person name="Codani J.-J."/>
            <person name="Connerton I.F."/>
            <person name="Cummings N.J."/>
            <person name="Daniel R.A."/>
            <person name="Denizot F."/>
            <person name="Devine K.M."/>
            <person name="Duesterhoeft A."/>
            <person name="Ehrlich S.D."/>
            <person name="Emmerson P.T."/>
            <person name="Entian K.-D."/>
            <person name="Errington J."/>
            <person name="Fabret C."/>
            <person name="Ferrari E."/>
            <person name="Foulger D."/>
            <person name="Fritz C."/>
            <person name="Fujita M."/>
            <person name="Fujita Y."/>
            <person name="Fuma S."/>
            <person name="Galizzi A."/>
            <person name="Galleron N."/>
            <person name="Ghim S.-Y."/>
            <person name="Glaser P."/>
            <person name="Goffeau A."/>
            <person name="Golightly E.J."/>
            <person name="Grandi G."/>
            <person name="Guiseppi G."/>
            <person name="Guy B.J."/>
            <person name="Haga K."/>
            <person name="Haiech J."/>
            <person name="Harwood C.R."/>
            <person name="Henaut A."/>
            <person name="Hilbert H."/>
            <person name="Holsappel S."/>
            <person name="Hosono S."/>
            <person name="Hullo M.-F."/>
            <person name="Itaya M."/>
            <person name="Jones L.-M."/>
            <person name="Joris B."/>
            <person name="Karamata D."/>
            <person name="Kasahara Y."/>
            <person name="Klaerr-Blanchard M."/>
            <person name="Klein C."/>
            <person name="Kobayashi Y."/>
            <person name="Koetter P."/>
            <person name="Koningstein G."/>
            <person name="Krogh S."/>
            <person name="Kumano M."/>
            <person name="Kurita K."/>
            <person name="Lapidus A."/>
            <person name="Lardinois S."/>
            <person name="Lauber J."/>
            <person name="Lazarevic V."/>
            <person name="Lee S.-M."/>
            <person name="Levine A."/>
            <person name="Liu H."/>
            <person name="Masuda S."/>
            <person name="Mauel C."/>
            <person name="Medigue C."/>
            <person name="Medina N."/>
            <person name="Mellado R.P."/>
            <person name="Mizuno M."/>
            <person name="Moestl D."/>
            <person name="Nakai S."/>
            <person name="Noback M."/>
            <person name="Noone D."/>
            <person name="O'Reilly M."/>
            <person name="Ogawa K."/>
            <person name="Ogiwara A."/>
            <person name="Oudega B."/>
            <person name="Park S.-H."/>
            <person name="Parro V."/>
            <person name="Pohl T.M."/>
            <person name="Portetelle D."/>
            <person name="Porwollik S."/>
            <person name="Prescott A.M."/>
            <person name="Presecan E."/>
            <person name="Pujic P."/>
            <person name="Purnelle B."/>
            <person name="Rapoport G."/>
            <person name="Rey M."/>
            <person name="Reynolds S."/>
            <person name="Rieger M."/>
            <person name="Rivolta C."/>
            <person name="Rocha E."/>
            <person name="Roche B."/>
            <person name="Rose M."/>
            <person name="Sadaie Y."/>
            <person name="Sato T."/>
            <person name="Scanlan E."/>
            <person name="Schleich S."/>
            <person name="Schroeter R."/>
            <person name="Scoffone F."/>
            <person name="Sekiguchi J."/>
            <person name="Sekowska A."/>
            <person name="Seror S.J."/>
            <person name="Serror P."/>
            <person name="Shin B.-S."/>
            <person name="Soldo B."/>
            <person name="Sorokin A."/>
            <person name="Tacconi E."/>
            <person name="Takagi T."/>
            <person name="Takahashi H."/>
            <person name="Takemaru K."/>
            <person name="Takeuchi M."/>
            <person name="Tamakoshi A."/>
            <person name="Tanaka T."/>
            <person name="Terpstra P."/>
            <person name="Tognoni A."/>
            <person name="Tosato V."/>
            <person name="Uchiyama S."/>
            <person name="Vandenbol M."/>
            <person name="Vannier F."/>
            <person name="Vassarotti A."/>
            <person name="Viari A."/>
            <person name="Wambutt R."/>
            <person name="Wedler E."/>
            <person name="Wedler H."/>
            <person name="Weitzenegger T."/>
            <person name="Winters P."/>
            <person name="Wipat A."/>
            <person name="Yamamoto H."/>
            <person name="Yamane K."/>
            <person name="Yasumoto K."/>
            <person name="Yata K."/>
            <person name="Yoshida K."/>
            <person name="Yoshikawa H.-F."/>
            <person name="Zumstein E."/>
            <person name="Yoshikawa H."/>
            <person name="Danchin A."/>
        </authorList>
    </citation>
    <scope>NUCLEOTIDE SEQUENCE [LARGE SCALE GENOMIC DNA]</scope>
    <source>
        <strain>168</strain>
    </source>
</reference>
<reference key="4">
    <citation type="journal article" date="2005" name="Mol. Microbiol.">
        <title>A master regulator for biofilm formation by Bacillus subtilis.</title>
        <authorList>
            <person name="Kearns D.B."/>
            <person name="Chu F."/>
            <person name="Branda S.S."/>
            <person name="Kolter R."/>
            <person name="Losick R."/>
        </authorList>
    </citation>
    <scope>PROBABLE FUNCTION</scope>
    <scope>INDUCTION</scope>
</reference>
<gene>
    <name type="primary">epsN</name>
    <name type="synonym">yvfE</name>
    <name type="ordered locus">BSU34230</name>
</gene>
<sequence length="388" mass="42924">MHKKIYLSPPHMSGREQHYISEAFRSNWIAPLGPLVNSFEEQLAERVGVKAAAAVGSGTAAIHLALRLLEVKEGDSVFCQSFTFVATANPILYEKAVPVFIDSEPDTWNMSPTALERALEEAKRNGTLPKAVIAVNLYGQSAKMDEIVSLCDAYGVPVIEDAAESLGTVYKGKQSGTFGRFGIFSFNGNKIITTSGGGMLVSNDEAAIEKARFLASQAREPAVHYQHSEIGHNYRLSNILAGVGIAQLEVLDERVEKRRTIFTRYKNALGHLDGVRFMPEYAAGVSNRWLTTLTLDNGLSPYDIVQRLAEENIEARPLWKPLHTQPLFDPALFYSHEDTGSVCEDLFKRGICLPSGSNMTEDEQGRVIEVLLHLFHTVEVKKWTASIR</sequence>